<gene>
    <name type="primary">DLX5</name>
</gene>
<dbReference type="EMBL" id="AK023493">
    <property type="protein sequence ID" value="BAB14587.1"/>
    <property type="molecule type" value="mRNA"/>
</dbReference>
<dbReference type="EMBL" id="AK297614">
    <property type="protein sequence ID" value="BAH12629.1"/>
    <property type="molecule type" value="mRNA"/>
</dbReference>
<dbReference type="EMBL" id="AC004774">
    <property type="protein sequence ID" value="AAC17833.1"/>
    <property type="molecule type" value="Genomic_DNA"/>
</dbReference>
<dbReference type="EMBL" id="BC006226">
    <property type="protein sequence ID" value="AAH06226.1"/>
    <property type="molecule type" value="mRNA"/>
</dbReference>
<dbReference type="CCDS" id="CCDS5647.1">
    <molecule id="P56178-1"/>
</dbReference>
<dbReference type="PIR" id="C53495">
    <property type="entry name" value="C53495"/>
</dbReference>
<dbReference type="RefSeq" id="NP_005212.1">
    <molecule id="P56178-1"/>
    <property type="nucleotide sequence ID" value="NM_005221.6"/>
</dbReference>
<dbReference type="PDB" id="2DJN">
    <property type="method" value="NMR"/>
    <property type="chains" value="A=138-194"/>
</dbReference>
<dbReference type="PDB" id="4RDU">
    <property type="method" value="X-ray"/>
    <property type="resolution" value="1.85 A"/>
    <property type="chains" value="A/D=135-198"/>
</dbReference>
<dbReference type="PDBsum" id="2DJN"/>
<dbReference type="PDBsum" id="4RDU"/>
<dbReference type="BMRB" id="P56178"/>
<dbReference type="SMR" id="P56178"/>
<dbReference type="BioGRID" id="108093">
    <property type="interactions" value="16"/>
</dbReference>
<dbReference type="FunCoup" id="P56178">
    <property type="interactions" value="421"/>
</dbReference>
<dbReference type="IntAct" id="P56178">
    <property type="interactions" value="10"/>
</dbReference>
<dbReference type="MINT" id="P56178"/>
<dbReference type="STRING" id="9606.ENSP00000498116"/>
<dbReference type="iPTMnet" id="P56178"/>
<dbReference type="PhosphoSitePlus" id="P56178"/>
<dbReference type="BioMuta" id="DLX5"/>
<dbReference type="DMDM" id="12644329"/>
<dbReference type="jPOST" id="P56178"/>
<dbReference type="MassIVE" id="P56178"/>
<dbReference type="PaxDb" id="9606-ENSP00000222598"/>
<dbReference type="PeptideAtlas" id="P56178"/>
<dbReference type="ProteomicsDB" id="56892">
    <molecule id="P56178-1"/>
</dbReference>
<dbReference type="Pumba" id="P56178"/>
<dbReference type="Antibodypedia" id="1428">
    <property type="antibodies" value="501 antibodies from 39 providers"/>
</dbReference>
<dbReference type="DNASU" id="1749"/>
<dbReference type="Ensembl" id="ENST00000486603.2">
    <molecule id="P56178-2"/>
    <property type="protein sequence ID" value="ENSP00000475008.1"/>
    <property type="gene ID" value="ENSG00000105880.7"/>
</dbReference>
<dbReference type="Ensembl" id="ENST00000648378.1">
    <molecule id="P56178-1"/>
    <property type="protein sequence ID" value="ENSP00000498116.1"/>
    <property type="gene ID" value="ENSG00000105880.7"/>
</dbReference>
<dbReference type="GeneID" id="1749"/>
<dbReference type="KEGG" id="hsa:1749"/>
<dbReference type="MANE-Select" id="ENST00000648378.1">
    <property type="protein sequence ID" value="ENSP00000498116.1"/>
    <property type="RefSeq nucleotide sequence ID" value="NM_005221.6"/>
    <property type="RefSeq protein sequence ID" value="NP_005212.1"/>
</dbReference>
<dbReference type="UCSC" id="uc011kim.2">
    <molecule id="P56178-1"/>
    <property type="organism name" value="human"/>
</dbReference>
<dbReference type="AGR" id="HGNC:2918"/>
<dbReference type="CTD" id="1749"/>
<dbReference type="DisGeNET" id="1749"/>
<dbReference type="GeneCards" id="DLX5"/>
<dbReference type="HGNC" id="HGNC:2918">
    <property type="gene designation" value="DLX5"/>
</dbReference>
<dbReference type="HPA" id="ENSG00000105880">
    <property type="expression patterns" value="Tissue enhanced (endometrium, placenta, skin)"/>
</dbReference>
<dbReference type="MalaCards" id="DLX5"/>
<dbReference type="MIM" id="220600">
    <property type="type" value="phenotype"/>
</dbReference>
<dbReference type="MIM" id="600028">
    <property type="type" value="gene"/>
</dbReference>
<dbReference type="neXtProt" id="NX_P56178"/>
<dbReference type="OpenTargets" id="ENSG00000105880"/>
<dbReference type="Orphanet" id="2440">
    <property type="disease" value="Isolated split hand-split foot malformation"/>
</dbReference>
<dbReference type="Orphanet" id="71271">
    <property type="disease" value="Split hand-split foot-deafness syndrome"/>
</dbReference>
<dbReference type="PharmGKB" id="PA27373"/>
<dbReference type="VEuPathDB" id="HostDB:ENSG00000105880"/>
<dbReference type="eggNOG" id="KOG0850">
    <property type="taxonomic scope" value="Eukaryota"/>
</dbReference>
<dbReference type="GeneTree" id="ENSGT00940000159188"/>
<dbReference type="HOGENOM" id="CLU_074733_0_0_1"/>
<dbReference type="InParanoid" id="P56178"/>
<dbReference type="OMA" id="GVSHGYC"/>
<dbReference type="OrthoDB" id="6159439at2759"/>
<dbReference type="PAN-GO" id="P56178">
    <property type="GO annotations" value="6 GO annotations based on evolutionary models"/>
</dbReference>
<dbReference type="PhylomeDB" id="P56178"/>
<dbReference type="TreeFam" id="TF350606"/>
<dbReference type="PathwayCommons" id="P56178"/>
<dbReference type="Reactome" id="R-HSA-8939902">
    <property type="pathway name" value="Regulation of RUNX2 expression and activity"/>
</dbReference>
<dbReference type="Reactome" id="R-HSA-9834899">
    <property type="pathway name" value="Specification of the neural plate border"/>
</dbReference>
<dbReference type="SignaLink" id="P56178"/>
<dbReference type="SIGNOR" id="P56178"/>
<dbReference type="BioGRID-ORCS" id="1749">
    <property type="hits" value="10 hits in 1171 CRISPR screens"/>
</dbReference>
<dbReference type="EvolutionaryTrace" id="P56178"/>
<dbReference type="GeneWiki" id="DLX5"/>
<dbReference type="GenomeRNAi" id="1749"/>
<dbReference type="Pharos" id="P56178">
    <property type="development level" value="Tbio"/>
</dbReference>
<dbReference type="PRO" id="PR:P56178"/>
<dbReference type="Proteomes" id="UP000005640">
    <property type="component" value="Chromosome 7"/>
</dbReference>
<dbReference type="RNAct" id="P56178">
    <property type="molecule type" value="protein"/>
</dbReference>
<dbReference type="Bgee" id="ENSG00000105880">
    <property type="expression patterns" value="Expressed in tibia and 101 other cell types or tissues"/>
</dbReference>
<dbReference type="ExpressionAtlas" id="P56178">
    <property type="expression patterns" value="baseline and differential"/>
</dbReference>
<dbReference type="GO" id="GO:0000785">
    <property type="term" value="C:chromatin"/>
    <property type="evidence" value="ECO:0000250"/>
    <property type="project" value="BHF-UCL"/>
</dbReference>
<dbReference type="GO" id="GO:0005737">
    <property type="term" value="C:cytoplasm"/>
    <property type="evidence" value="ECO:0007669"/>
    <property type="project" value="Ensembl"/>
</dbReference>
<dbReference type="GO" id="GO:0005634">
    <property type="term" value="C:nucleus"/>
    <property type="evidence" value="ECO:0007669"/>
    <property type="project" value="UniProtKB-SubCell"/>
</dbReference>
<dbReference type="GO" id="GO:0001228">
    <property type="term" value="F:DNA-binding transcription activator activity, RNA polymerase II-specific"/>
    <property type="evidence" value="ECO:0000250"/>
    <property type="project" value="BHF-UCL"/>
</dbReference>
<dbReference type="GO" id="GO:0000981">
    <property type="term" value="F:DNA-binding transcription factor activity, RNA polymerase II-specific"/>
    <property type="evidence" value="ECO:0000247"/>
    <property type="project" value="NTNU_SB"/>
</dbReference>
<dbReference type="GO" id="GO:0071837">
    <property type="term" value="F:HMG box domain binding"/>
    <property type="evidence" value="ECO:0007669"/>
    <property type="project" value="Ensembl"/>
</dbReference>
<dbReference type="GO" id="GO:0000978">
    <property type="term" value="F:RNA polymerase II cis-regulatory region sequence-specific DNA binding"/>
    <property type="evidence" value="ECO:0000250"/>
    <property type="project" value="BHF-UCL"/>
</dbReference>
<dbReference type="GO" id="GO:1990837">
    <property type="term" value="F:sequence-specific double-stranded DNA binding"/>
    <property type="evidence" value="ECO:0000314"/>
    <property type="project" value="ARUK-UCL"/>
</dbReference>
<dbReference type="GO" id="GO:0000976">
    <property type="term" value="F:transcription cis-regulatory region binding"/>
    <property type="evidence" value="ECO:0000314"/>
    <property type="project" value="UniProtKB"/>
</dbReference>
<dbReference type="GO" id="GO:0048646">
    <property type="term" value="P:anatomical structure formation involved in morphogenesis"/>
    <property type="evidence" value="ECO:0007669"/>
    <property type="project" value="Ensembl"/>
</dbReference>
<dbReference type="GO" id="GO:0030509">
    <property type="term" value="P:BMP signaling pathway"/>
    <property type="evidence" value="ECO:0000250"/>
    <property type="project" value="BHF-UCL"/>
</dbReference>
<dbReference type="GO" id="GO:0030154">
    <property type="term" value="P:cell differentiation"/>
    <property type="evidence" value="ECO:0000318"/>
    <property type="project" value="GO_Central"/>
</dbReference>
<dbReference type="GO" id="GO:0008283">
    <property type="term" value="P:cell population proliferation"/>
    <property type="evidence" value="ECO:0000314"/>
    <property type="project" value="UniProtKB"/>
</dbReference>
<dbReference type="GO" id="GO:0030326">
    <property type="term" value="P:embryonic limb morphogenesis"/>
    <property type="evidence" value="ECO:0007669"/>
    <property type="project" value="Ensembl"/>
</dbReference>
<dbReference type="GO" id="GO:0048706">
    <property type="term" value="P:embryonic skeletal system development"/>
    <property type="evidence" value="ECO:0000318"/>
    <property type="project" value="GO_Central"/>
</dbReference>
<dbReference type="GO" id="GO:0001958">
    <property type="term" value="P:endochondral ossification"/>
    <property type="evidence" value="ECO:0000250"/>
    <property type="project" value="UniProtKB"/>
</dbReference>
<dbReference type="GO" id="GO:0030855">
    <property type="term" value="P:epithelial cell differentiation"/>
    <property type="evidence" value="ECO:0007669"/>
    <property type="project" value="Ensembl"/>
</dbReference>
<dbReference type="GO" id="GO:0060325">
    <property type="term" value="P:face morphogenesis"/>
    <property type="evidence" value="ECO:0007669"/>
    <property type="project" value="Ensembl"/>
</dbReference>
<dbReference type="GO" id="GO:0042472">
    <property type="term" value="P:inner ear morphogenesis"/>
    <property type="evidence" value="ECO:0007669"/>
    <property type="project" value="Ensembl"/>
</dbReference>
<dbReference type="GO" id="GO:0097376">
    <property type="term" value="P:interneuron axon guidance"/>
    <property type="evidence" value="ECO:0007669"/>
    <property type="project" value="Ensembl"/>
</dbReference>
<dbReference type="GO" id="GO:0007399">
    <property type="term" value="P:nervous system development"/>
    <property type="evidence" value="ECO:0000304"/>
    <property type="project" value="ProtInc"/>
</dbReference>
<dbReference type="GO" id="GO:0021889">
    <property type="term" value="P:olfactory bulb interneuron differentiation"/>
    <property type="evidence" value="ECO:0007669"/>
    <property type="project" value="Ensembl"/>
</dbReference>
<dbReference type="GO" id="GO:0060166">
    <property type="term" value="P:olfactory pit development"/>
    <property type="evidence" value="ECO:0007669"/>
    <property type="project" value="Ensembl"/>
</dbReference>
<dbReference type="GO" id="GO:0001649">
    <property type="term" value="P:osteoblast differentiation"/>
    <property type="evidence" value="ECO:0000250"/>
    <property type="project" value="UniProtKB"/>
</dbReference>
<dbReference type="GO" id="GO:0090263">
    <property type="term" value="P:positive regulation of canonical Wnt signaling pathway"/>
    <property type="evidence" value="ECO:0007669"/>
    <property type="project" value="Ensembl"/>
</dbReference>
<dbReference type="GO" id="GO:0045893">
    <property type="term" value="P:positive regulation of DNA-templated transcription"/>
    <property type="evidence" value="ECO:0000314"/>
    <property type="project" value="UniProtKB"/>
</dbReference>
<dbReference type="GO" id="GO:0050679">
    <property type="term" value="P:positive regulation of epithelial cell proliferation"/>
    <property type="evidence" value="ECO:0007669"/>
    <property type="project" value="Ensembl"/>
</dbReference>
<dbReference type="GO" id="GO:0010628">
    <property type="term" value="P:positive regulation of gene expression"/>
    <property type="evidence" value="ECO:0007669"/>
    <property type="project" value="Ensembl"/>
</dbReference>
<dbReference type="GO" id="GO:0045944">
    <property type="term" value="P:positive regulation of transcription by RNA polymerase II"/>
    <property type="evidence" value="ECO:0000250"/>
    <property type="project" value="BHF-UCL"/>
</dbReference>
<dbReference type="GO" id="GO:0006357">
    <property type="term" value="P:regulation of transcription by RNA polymerase II"/>
    <property type="evidence" value="ECO:0000318"/>
    <property type="project" value="GO_Central"/>
</dbReference>
<dbReference type="GO" id="GO:0060021">
    <property type="term" value="P:roof of mouth development"/>
    <property type="evidence" value="ECO:0007669"/>
    <property type="project" value="Ensembl"/>
</dbReference>
<dbReference type="GO" id="GO:0001501">
    <property type="term" value="P:skeletal system development"/>
    <property type="evidence" value="ECO:0000304"/>
    <property type="project" value="ProtInc"/>
</dbReference>
<dbReference type="CDD" id="cd00086">
    <property type="entry name" value="homeodomain"/>
    <property type="match status" value="1"/>
</dbReference>
<dbReference type="FunFam" id="1.10.10.60:FF:000048">
    <property type="entry name" value="Distal-less homeobox 2"/>
    <property type="match status" value="1"/>
</dbReference>
<dbReference type="Gene3D" id="1.10.10.60">
    <property type="entry name" value="Homeodomain-like"/>
    <property type="match status" value="1"/>
</dbReference>
<dbReference type="InterPro" id="IPR050460">
    <property type="entry name" value="Distal-less_Homeobox_TF"/>
</dbReference>
<dbReference type="InterPro" id="IPR022135">
    <property type="entry name" value="Distal-less_N"/>
</dbReference>
<dbReference type="InterPro" id="IPR001356">
    <property type="entry name" value="HD"/>
</dbReference>
<dbReference type="InterPro" id="IPR020479">
    <property type="entry name" value="HD_metazoa"/>
</dbReference>
<dbReference type="InterPro" id="IPR017970">
    <property type="entry name" value="Homeobox_CS"/>
</dbReference>
<dbReference type="InterPro" id="IPR009057">
    <property type="entry name" value="Homeodomain-like_sf"/>
</dbReference>
<dbReference type="InterPro" id="IPR000047">
    <property type="entry name" value="HTH_motif"/>
</dbReference>
<dbReference type="PANTHER" id="PTHR24327">
    <property type="entry name" value="HOMEOBOX PROTEIN"/>
    <property type="match status" value="1"/>
</dbReference>
<dbReference type="PANTHER" id="PTHR24327:SF31">
    <property type="entry name" value="HOMEOBOX PROTEIN DLX-5"/>
    <property type="match status" value="1"/>
</dbReference>
<dbReference type="Pfam" id="PF12413">
    <property type="entry name" value="DLL_N"/>
    <property type="match status" value="1"/>
</dbReference>
<dbReference type="Pfam" id="PF00046">
    <property type="entry name" value="Homeodomain"/>
    <property type="match status" value="1"/>
</dbReference>
<dbReference type="PRINTS" id="PR00024">
    <property type="entry name" value="HOMEOBOX"/>
</dbReference>
<dbReference type="PRINTS" id="PR00031">
    <property type="entry name" value="HTHREPRESSR"/>
</dbReference>
<dbReference type="SMART" id="SM00389">
    <property type="entry name" value="HOX"/>
    <property type="match status" value="1"/>
</dbReference>
<dbReference type="SUPFAM" id="SSF46689">
    <property type="entry name" value="Homeodomain-like"/>
    <property type="match status" value="1"/>
</dbReference>
<dbReference type="PROSITE" id="PS00027">
    <property type="entry name" value="HOMEOBOX_1"/>
    <property type="match status" value="1"/>
</dbReference>
<dbReference type="PROSITE" id="PS50071">
    <property type="entry name" value="HOMEOBOX_2"/>
    <property type="match status" value="1"/>
</dbReference>
<protein>
    <recommendedName>
        <fullName>Homeobox protein DLX-5</fullName>
    </recommendedName>
</protein>
<comment type="function">
    <text evidence="6">Transcriptional factor involved in bone development. Acts as an immediate early BMP-responsive transcriptional activator essential for osteoblast differentiation. Stimulates ALPL promoter activity in a RUNX2-independent manner during osteoblast differentiation. Stimulates SP7 promoter activity during osteoblast differentiation. Promotes cell proliferation by up-regulating MYC promoter activity. Involved as a positive regulator of both chondrogenesis and chondrocyte hypertrophy in the endochondral skeleton. Binds to the homeodomain-response element of the ALPL and SP7 promoter. Binds to the MYC promoter. Requires the 5'-TAATTA-3' consensus sequence for DNA-binding.</text>
</comment>
<comment type="subunit">
    <text evidence="5">Interacts with XRCC6 (Ku70).</text>
</comment>
<comment type="subcellular location">
    <subcellularLocation>
        <location evidence="3">Nucleus</location>
    </subcellularLocation>
</comment>
<comment type="alternative products">
    <event type="alternative splicing"/>
    <isoform>
        <id>P56178-1</id>
        <name>1</name>
        <sequence type="displayed"/>
    </isoform>
    <isoform>
        <id>P56178-2</id>
        <name>2</name>
        <sequence type="described" ref="VSP_056884"/>
    </isoform>
</comment>
<comment type="developmental stage">
    <text>First expressed in embryos at 8.5-9 days in facial and branchial arch mesenchyme, otic vesicles and frontonasal ectoderm around olfactory placodes, a day later expression is seen in the developing forebrain in primordia of the ganglionic eminence and ventral diencephalic regions. In day 12.5 embryos, expressed in the brain and bones, and also in all skeletal structures of midgestation embryos after the first cartilage formation. Expression remains unaltered in both brain and skeleton in day 15 embryos and slowly decreases in day 17 embryos.</text>
</comment>
<comment type="PTM">
    <text evidence="1">Phosphorylated. Phosphorylation of Ser-34 and Ser-217 by MAPK14 enhances its transcriptional activity. Phosphorylation by CaMK2 increases its protein stability (By similarity).</text>
</comment>
<comment type="disease" evidence="7">
    <disease id="DI-03391">
        <name>Split-hand/foot malformation 1 with sensorineural hearing loss, autosomal recessive</name>
        <acronym>SHFM1D</acronym>
        <description>A disease characterized by the association of split-hand/foot malformation with deafness. Split-hand/foot malformation is a limb malformation involving the central rays of the autopod and presenting with syndactyly, median clefts of the hands and feet, and aplasia and/or hypoplasia of the phalanges, metacarpals, and metatarsals. Some patients have been found to have intellectual disability, ectodermal and craniofacial findings, and orofacial clefting.</description>
        <dbReference type="MIM" id="220600"/>
    </disease>
    <text>The disease is caused by variants affecting the gene represented in this entry.</text>
</comment>
<comment type="similarity">
    <text evidence="9">Belongs to the distal-less homeobox family.</text>
</comment>
<comment type="online information" name="Atlas of Genetics and Cytogenetics in Oncology and Haematology">
    <link uri="https://atlasgeneticsoncology.org/gene/44295/DLX5"/>
</comment>
<sequence>MTGVFDRRVPSIRSGDFQAPFQTSAAMHHPSQESPTLPESSATDSDYYSPTGGAPHGYCSPTSASYGKALNPYQYQYHGVNGSAGSYPAKAYADYSYASSYHQYGGAYNRVPSATNQPEKEVTEPEVRMVNGKPKKVRKPRTIYSSFQLAALQRRFQKTQYLALPERAELAASLGLTQTQVKIWFQNKRSKIKKIMKNGEMPPEHSPSSSDPMACNSPQSPAVWEPQGSSRSLSHHPHAHPPTSNQSPASSYLENSASWYTSAASSINSHLPPPGSLQHPLALASGTLY</sequence>
<reference key="1">
    <citation type="journal article" date="2004" name="Nat. Genet.">
        <title>Complete sequencing and characterization of 21,243 full-length human cDNAs.</title>
        <authorList>
            <person name="Ota T."/>
            <person name="Suzuki Y."/>
            <person name="Nishikawa T."/>
            <person name="Otsuki T."/>
            <person name="Sugiyama T."/>
            <person name="Irie R."/>
            <person name="Wakamatsu A."/>
            <person name="Hayashi K."/>
            <person name="Sato H."/>
            <person name="Nagai K."/>
            <person name="Kimura K."/>
            <person name="Makita H."/>
            <person name="Sekine M."/>
            <person name="Obayashi M."/>
            <person name="Nishi T."/>
            <person name="Shibahara T."/>
            <person name="Tanaka T."/>
            <person name="Ishii S."/>
            <person name="Yamamoto J."/>
            <person name="Saito K."/>
            <person name="Kawai Y."/>
            <person name="Isono Y."/>
            <person name="Nakamura Y."/>
            <person name="Nagahari K."/>
            <person name="Murakami K."/>
            <person name="Yasuda T."/>
            <person name="Iwayanagi T."/>
            <person name="Wagatsuma M."/>
            <person name="Shiratori A."/>
            <person name="Sudo H."/>
            <person name="Hosoiri T."/>
            <person name="Kaku Y."/>
            <person name="Kodaira H."/>
            <person name="Kondo H."/>
            <person name="Sugawara M."/>
            <person name="Takahashi M."/>
            <person name="Kanda K."/>
            <person name="Yokoi T."/>
            <person name="Furuya T."/>
            <person name="Kikkawa E."/>
            <person name="Omura Y."/>
            <person name="Abe K."/>
            <person name="Kamihara K."/>
            <person name="Katsuta N."/>
            <person name="Sato K."/>
            <person name="Tanikawa M."/>
            <person name="Yamazaki M."/>
            <person name="Ninomiya K."/>
            <person name="Ishibashi T."/>
            <person name="Yamashita H."/>
            <person name="Murakawa K."/>
            <person name="Fujimori K."/>
            <person name="Tanai H."/>
            <person name="Kimata M."/>
            <person name="Watanabe M."/>
            <person name="Hiraoka S."/>
            <person name="Chiba Y."/>
            <person name="Ishida S."/>
            <person name="Ono Y."/>
            <person name="Takiguchi S."/>
            <person name="Watanabe S."/>
            <person name="Yosida M."/>
            <person name="Hotuta T."/>
            <person name="Kusano J."/>
            <person name="Kanehori K."/>
            <person name="Takahashi-Fujii A."/>
            <person name="Hara H."/>
            <person name="Tanase T.-O."/>
            <person name="Nomura Y."/>
            <person name="Togiya S."/>
            <person name="Komai F."/>
            <person name="Hara R."/>
            <person name="Takeuchi K."/>
            <person name="Arita M."/>
            <person name="Imose N."/>
            <person name="Musashino K."/>
            <person name="Yuuki H."/>
            <person name="Oshima A."/>
            <person name="Sasaki N."/>
            <person name="Aotsuka S."/>
            <person name="Yoshikawa Y."/>
            <person name="Matsunawa H."/>
            <person name="Ichihara T."/>
            <person name="Shiohata N."/>
            <person name="Sano S."/>
            <person name="Moriya S."/>
            <person name="Momiyama H."/>
            <person name="Satoh N."/>
            <person name="Takami S."/>
            <person name="Terashima Y."/>
            <person name="Suzuki O."/>
            <person name="Nakagawa S."/>
            <person name="Senoh A."/>
            <person name="Mizoguchi H."/>
            <person name="Goto Y."/>
            <person name="Shimizu F."/>
            <person name="Wakebe H."/>
            <person name="Hishigaki H."/>
            <person name="Watanabe T."/>
            <person name="Sugiyama A."/>
            <person name="Takemoto M."/>
            <person name="Kawakami B."/>
            <person name="Yamazaki M."/>
            <person name="Watanabe K."/>
            <person name="Kumagai A."/>
            <person name="Itakura S."/>
            <person name="Fukuzumi Y."/>
            <person name="Fujimori Y."/>
            <person name="Komiyama M."/>
            <person name="Tashiro H."/>
            <person name="Tanigami A."/>
            <person name="Fujiwara T."/>
            <person name="Ono T."/>
            <person name="Yamada K."/>
            <person name="Fujii Y."/>
            <person name="Ozaki K."/>
            <person name="Hirao M."/>
            <person name="Ohmori Y."/>
            <person name="Kawabata A."/>
            <person name="Hikiji T."/>
            <person name="Kobatake N."/>
            <person name="Inagaki H."/>
            <person name="Ikema Y."/>
            <person name="Okamoto S."/>
            <person name="Okitani R."/>
            <person name="Kawakami T."/>
            <person name="Noguchi S."/>
            <person name="Itoh T."/>
            <person name="Shigeta K."/>
            <person name="Senba T."/>
            <person name="Matsumura K."/>
            <person name="Nakajima Y."/>
            <person name="Mizuno T."/>
            <person name="Morinaga M."/>
            <person name="Sasaki M."/>
            <person name="Togashi T."/>
            <person name="Oyama M."/>
            <person name="Hata H."/>
            <person name="Watanabe M."/>
            <person name="Komatsu T."/>
            <person name="Mizushima-Sugano J."/>
            <person name="Satoh T."/>
            <person name="Shirai Y."/>
            <person name="Takahashi Y."/>
            <person name="Nakagawa K."/>
            <person name="Okumura K."/>
            <person name="Nagase T."/>
            <person name="Nomura N."/>
            <person name="Kikuchi H."/>
            <person name="Masuho Y."/>
            <person name="Yamashita R."/>
            <person name="Nakai K."/>
            <person name="Yada T."/>
            <person name="Nakamura Y."/>
            <person name="Ohara O."/>
            <person name="Isogai T."/>
            <person name="Sugano S."/>
        </authorList>
    </citation>
    <scope>NUCLEOTIDE SEQUENCE [LARGE SCALE MRNA] (ISOFORMS 1 AND 2)</scope>
    <source>
        <tissue>Brain</tissue>
        <tissue>Placenta</tissue>
    </source>
</reference>
<reference key="2">
    <citation type="journal article" date="2003" name="Nature">
        <title>The DNA sequence of human chromosome 7.</title>
        <authorList>
            <person name="Hillier L.W."/>
            <person name="Fulton R.S."/>
            <person name="Fulton L.A."/>
            <person name="Graves T.A."/>
            <person name="Pepin K.H."/>
            <person name="Wagner-McPherson C."/>
            <person name="Layman D."/>
            <person name="Maas J."/>
            <person name="Jaeger S."/>
            <person name="Walker R."/>
            <person name="Wylie K."/>
            <person name="Sekhon M."/>
            <person name="Becker M.C."/>
            <person name="O'Laughlin M.D."/>
            <person name="Schaller M.E."/>
            <person name="Fewell G.A."/>
            <person name="Delehaunty K.D."/>
            <person name="Miner T.L."/>
            <person name="Nash W.E."/>
            <person name="Cordes M."/>
            <person name="Du H."/>
            <person name="Sun H."/>
            <person name="Edwards J."/>
            <person name="Bradshaw-Cordum H."/>
            <person name="Ali J."/>
            <person name="Andrews S."/>
            <person name="Isak A."/>
            <person name="Vanbrunt A."/>
            <person name="Nguyen C."/>
            <person name="Du F."/>
            <person name="Lamar B."/>
            <person name="Courtney L."/>
            <person name="Kalicki J."/>
            <person name="Ozersky P."/>
            <person name="Bielicki L."/>
            <person name="Scott K."/>
            <person name="Holmes A."/>
            <person name="Harkins R."/>
            <person name="Harris A."/>
            <person name="Strong C.M."/>
            <person name="Hou S."/>
            <person name="Tomlinson C."/>
            <person name="Dauphin-Kohlberg S."/>
            <person name="Kozlowicz-Reilly A."/>
            <person name="Leonard S."/>
            <person name="Rohlfing T."/>
            <person name="Rock S.M."/>
            <person name="Tin-Wollam A.-M."/>
            <person name="Abbott A."/>
            <person name="Minx P."/>
            <person name="Maupin R."/>
            <person name="Strowmatt C."/>
            <person name="Latreille P."/>
            <person name="Miller N."/>
            <person name="Johnson D."/>
            <person name="Murray J."/>
            <person name="Woessner J.P."/>
            <person name="Wendl M.C."/>
            <person name="Yang S.-P."/>
            <person name="Schultz B.R."/>
            <person name="Wallis J.W."/>
            <person name="Spieth J."/>
            <person name="Bieri T.A."/>
            <person name="Nelson J.O."/>
            <person name="Berkowicz N."/>
            <person name="Wohldmann P.E."/>
            <person name="Cook L.L."/>
            <person name="Hickenbotham M.T."/>
            <person name="Eldred J."/>
            <person name="Williams D."/>
            <person name="Bedell J.A."/>
            <person name="Mardis E.R."/>
            <person name="Clifton S.W."/>
            <person name="Chissoe S.L."/>
            <person name="Marra M.A."/>
            <person name="Raymond C."/>
            <person name="Haugen E."/>
            <person name="Gillett W."/>
            <person name="Zhou Y."/>
            <person name="James R."/>
            <person name="Phelps K."/>
            <person name="Iadanoto S."/>
            <person name="Bubb K."/>
            <person name="Simms E."/>
            <person name="Levy R."/>
            <person name="Clendenning J."/>
            <person name="Kaul R."/>
            <person name="Kent W.J."/>
            <person name="Furey T.S."/>
            <person name="Baertsch R.A."/>
            <person name="Brent M.R."/>
            <person name="Keibler E."/>
            <person name="Flicek P."/>
            <person name="Bork P."/>
            <person name="Suyama M."/>
            <person name="Bailey J.A."/>
            <person name="Portnoy M.E."/>
            <person name="Torrents D."/>
            <person name="Chinwalla A.T."/>
            <person name="Gish W.R."/>
            <person name="Eddy S.R."/>
            <person name="McPherson J.D."/>
            <person name="Olson M.V."/>
            <person name="Eichler E.E."/>
            <person name="Green E.D."/>
            <person name="Waterston R.H."/>
            <person name="Wilson R.K."/>
        </authorList>
    </citation>
    <scope>NUCLEOTIDE SEQUENCE [LARGE SCALE GENOMIC DNA]</scope>
</reference>
<reference key="3">
    <citation type="journal article" date="2004" name="Genome Res.">
        <title>The status, quality, and expansion of the NIH full-length cDNA project: the Mammalian Gene Collection (MGC).</title>
        <authorList>
            <consortium name="The MGC Project Team"/>
        </authorList>
    </citation>
    <scope>NUCLEOTIDE SEQUENCE [LARGE SCALE MRNA] (ISOFORM 1)</scope>
    <source>
        <tissue>Lung</tissue>
    </source>
</reference>
<reference key="4">
    <citation type="journal article" date="1994" name="Proc. Natl. Acad. Sci. U.S.A.">
        <title>Cloning and characterization of two members of the vertebrate Dlx gene family.</title>
        <authorList>
            <person name="Simeone A."/>
            <person name="Acampora D."/>
            <person name="Pannese M."/>
            <person name="D'Esposito M."/>
            <person name="Stornaiuolo A."/>
            <person name="Gulisano M."/>
            <person name="Mallamaci A."/>
            <person name="Kastury K."/>
            <person name="Druck T."/>
            <person name="Huebner K."/>
            <person name="Boncinelli E."/>
        </authorList>
    </citation>
    <scope>NUCLEOTIDE SEQUENCE [MRNA] OF 137-202 (ISOFORM 1)</scope>
    <source>
        <tissue>Embryo</tissue>
    </source>
</reference>
<reference key="5">
    <citation type="journal article" date="2002" name="J. Biol. Chem.">
        <title>Regulation of osteocalcin gene expression by a novel Ku antigen transcription factor complex.</title>
        <authorList>
            <person name="Willis D.M."/>
            <person name="Loewy A.P."/>
            <person name="Charlton-Kachigian N."/>
            <person name="Shao J.-S."/>
            <person name="Ornitz D.M."/>
            <person name="Towler D.A."/>
        </authorList>
    </citation>
    <scope>INTERACTION WITH XRCC6</scope>
    <source>
        <tissue>Osteoblast</tissue>
    </source>
</reference>
<reference key="6">
    <citation type="journal article" date="2009" name="J. Biol. Chem.">
        <title>DLX5 (distal-less homeobox 5) promotes tumor cell proliferation by transcriptionally regulating MYC.</title>
        <authorList>
            <person name="Xu J."/>
            <person name="Testa J.R."/>
        </authorList>
    </citation>
    <scope>FUNCTION</scope>
    <scope>DNA-BINDING</scope>
</reference>
<reference key="7">
    <citation type="submission" date="2006-10" db="PDB data bank">
        <title>The solution structure of the homeobox domain of human homeobox protein DLX-5.</title>
        <authorList>
            <consortium name="RIKEN structural genomics initiative (RSGI)"/>
        </authorList>
    </citation>
    <scope>STRUCTURE BY NMR OF 138-194</scope>
</reference>
<reference key="8">
    <citation type="journal article" date="2012" name="J. Med. Genet.">
        <title>Identification of a novel DLX5 mutation in a family with autosomal recessive split hand and foot malformation.</title>
        <authorList>
            <person name="Shamseldin H.E."/>
            <person name="Faden M.A."/>
            <person name="Alashram W."/>
            <person name="Alkuraya F.S."/>
        </authorList>
    </citation>
    <scope>VARIANT SHFM1D PRO-178</scope>
</reference>
<name>DLX5_HUMAN</name>
<feature type="chain" id="PRO_0000049031" description="Homeobox protein DLX-5">
    <location>
        <begin position="1"/>
        <end position="289"/>
    </location>
</feature>
<feature type="DNA-binding region" description="Homeobox" evidence="3">
    <location>
        <begin position="137"/>
        <end position="196"/>
    </location>
</feature>
<feature type="region of interest" description="Disordered" evidence="4">
    <location>
        <begin position="1"/>
        <end position="49"/>
    </location>
</feature>
<feature type="region of interest" description="Disordered" evidence="4">
    <location>
        <begin position="198"/>
        <end position="251"/>
    </location>
</feature>
<feature type="region of interest" description="Disordered" evidence="4">
    <location>
        <begin position="270"/>
        <end position="289"/>
    </location>
</feature>
<feature type="compositionally biased region" description="Polar residues" evidence="4">
    <location>
        <begin position="32"/>
        <end position="48"/>
    </location>
</feature>
<feature type="compositionally biased region" description="Polar residues" evidence="4">
    <location>
        <begin position="206"/>
        <end position="220"/>
    </location>
</feature>
<feature type="compositionally biased region" description="Polar residues" evidence="4">
    <location>
        <begin position="242"/>
        <end position="251"/>
    </location>
</feature>
<feature type="modified residue" description="Phosphoserine; by MAPK14; in vitro" evidence="2">
    <location>
        <position position="34"/>
    </location>
</feature>
<feature type="modified residue" description="Phosphoserine; by MAPK14; in vitro" evidence="2">
    <location>
        <position position="217"/>
    </location>
</feature>
<feature type="splice variant" id="VSP_056884" description="In isoform 2." evidence="8">
    <original>KIWFQNKRSKIKKIMKNGEMPPEHSPSSSDPMACNSPQSPAVWEPQGSSRSLSHHPHAHPPTSNQSPASSYLENSASWYTSAASSINSHLPPPGSLQHPLALASGTLY</original>
    <variation>NTALPCTRPA</variation>
    <location>
        <begin position="182"/>
        <end position="289"/>
    </location>
</feature>
<feature type="sequence variant" id="VAR_067413" description="In SHFM1D; dbSNP:rs387906737." evidence="7">
    <original>Q</original>
    <variation>P</variation>
    <location>
        <position position="178"/>
    </location>
</feature>
<feature type="sequence variant" id="VAR_033874" description="In dbSNP:rs35273378.">
    <original>S</original>
    <variation>R</variation>
    <location>
        <position position="234"/>
    </location>
</feature>
<feature type="helix" evidence="10">
    <location>
        <begin position="146"/>
        <end position="158"/>
    </location>
</feature>
<feature type="helix" evidence="10">
    <location>
        <begin position="164"/>
        <end position="173"/>
    </location>
</feature>
<feature type="helix" evidence="10">
    <location>
        <begin position="178"/>
        <end position="196"/>
    </location>
</feature>
<keyword id="KW-0002">3D-structure</keyword>
<keyword id="KW-0010">Activator</keyword>
<keyword id="KW-0025">Alternative splicing</keyword>
<keyword id="KW-0209">Deafness</keyword>
<keyword id="KW-0217">Developmental protein</keyword>
<keyword id="KW-0225">Disease variant</keyword>
<keyword id="KW-0238">DNA-binding</keyword>
<keyword id="KW-0371">Homeobox</keyword>
<keyword id="KW-0539">Nucleus</keyword>
<keyword id="KW-0892">Osteogenesis</keyword>
<keyword id="KW-0597">Phosphoprotein</keyword>
<keyword id="KW-1267">Proteomics identification</keyword>
<keyword id="KW-1185">Reference proteome</keyword>
<keyword id="KW-0804">Transcription</keyword>
<keyword id="KW-0805">Transcription regulation</keyword>
<evidence type="ECO:0000250" key="1"/>
<evidence type="ECO:0000250" key="2">
    <source>
        <dbReference type="UniProtKB" id="P70396"/>
    </source>
</evidence>
<evidence type="ECO:0000255" key="3">
    <source>
        <dbReference type="PROSITE-ProRule" id="PRU00108"/>
    </source>
</evidence>
<evidence type="ECO:0000256" key="4">
    <source>
        <dbReference type="SAM" id="MobiDB-lite"/>
    </source>
</evidence>
<evidence type="ECO:0000269" key="5">
    <source>
    </source>
</evidence>
<evidence type="ECO:0000269" key="6">
    <source>
    </source>
</evidence>
<evidence type="ECO:0000269" key="7">
    <source>
    </source>
</evidence>
<evidence type="ECO:0000303" key="8">
    <source>
    </source>
</evidence>
<evidence type="ECO:0000305" key="9"/>
<evidence type="ECO:0007829" key="10">
    <source>
        <dbReference type="PDB" id="4RDU"/>
    </source>
</evidence>
<organism>
    <name type="scientific">Homo sapiens</name>
    <name type="common">Human</name>
    <dbReference type="NCBI Taxonomy" id="9606"/>
    <lineage>
        <taxon>Eukaryota</taxon>
        <taxon>Metazoa</taxon>
        <taxon>Chordata</taxon>
        <taxon>Craniata</taxon>
        <taxon>Vertebrata</taxon>
        <taxon>Euteleostomi</taxon>
        <taxon>Mammalia</taxon>
        <taxon>Eutheria</taxon>
        <taxon>Euarchontoglires</taxon>
        <taxon>Primates</taxon>
        <taxon>Haplorrhini</taxon>
        <taxon>Catarrhini</taxon>
        <taxon>Hominidae</taxon>
        <taxon>Homo</taxon>
    </lineage>
</organism>
<proteinExistence type="evidence at protein level"/>
<accession>P56178</accession>
<accession>B7Z4P3</accession>
<accession>Q9UPL1</accession>